<keyword id="KW-0963">Cytoplasm</keyword>
<keyword id="KW-0489">Methyltransferase</keyword>
<keyword id="KW-0949">S-adenosyl-L-methionine</keyword>
<keyword id="KW-0808">Transferase</keyword>
<sequence length="329" mass="37780">MLKPMYYEFFFIFPKERELFESFLLDTTHLALEESSLENLKAFDDKETIEFISQSSWHYFATHDPLKEHLKEKPQHLKNFVILRSQKDLNNSLILALEAFCLNLKQNLQSEFDFFYLSRNLASKDWLEAYKQAILPVQCAKFYIHPSWHQKPSHISTDDCIMIDPALAFGSGHHESTSMCLELLSDLDLKRKNALDVGCGSGILSIALKKQGVSALVACDTDSLAVEETLKNFSLNQIPLLAQDKVIYGSTQKIEGRFDIIVANLVADVVKSLYSEFVRLCNHTLILSGILETHLNSVLQIYYNGFEILEQRQRNEWVALKLLKKQPIN</sequence>
<dbReference type="EC" id="2.1.1.-" evidence="1"/>
<dbReference type="EMBL" id="CP000241">
    <property type="protein sequence ID" value="ABF84446.1"/>
    <property type="molecule type" value="Genomic_DNA"/>
</dbReference>
<dbReference type="SMR" id="Q1CUC6"/>
<dbReference type="KEGG" id="hpa:HPAG1_0379"/>
<dbReference type="HOGENOM" id="CLU_049382_1_0_7"/>
<dbReference type="GO" id="GO:0005737">
    <property type="term" value="C:cytoplasm"/>
    <property type="evidence" value="ECO:0007669"/>
    <property type="project" value="UniProtKB-SubCell"/>
</dbReference>
<dbReference type="GO" id="GO:0016279">
    <property type="term" value="F:protein-lysine N-methyltransferase activity"/>
    <property type="evidence" value="ECO:0007669"/>
    <property type="project" value="RHEA"/>
</dbReference>
<dbReference type="GO" id="GO:0032259">
    <property type="term" value="P:methylation"/>
    <property type="evidence" value="ECO:0007669"/>
    <property type="project" value="UniProtKB-KW"/>
</dbReference>
<dbReference type="CDD" id="cd02440">
    <property type="entry name" value="AdoMet_MTases"/>
    <property type="match status" value="1"/>
</dbReference>
<dbReference type="Gene3D" id="3.40.50.150">
    <property type="entry name" value="Vaccinia Virus protein VP39"/>
    <property type="match status" value="1"/>
</dbReference>
<dbReference type="HAMAP" id="MF_00735">
    <property type="entry name" value="Methyltr_PrmA"/>
    <property type="match status" value="1"/>
</dbReference>
<dbReference type="InterPro" id="IPR050078">
    <property type="entry name" value="Ribosomal_L11_MeTrfase_PrmA"/>
</dbReference>
<dbReference type="InterPro" id="IPR004498">
    <property type="entry name" value="Ribosomal_PrmA_MeTrfase"/>
</dbReference>
<dbReference type="InterPro" id="IPR029063">
    <property type="entry name" value="SAM-dependent_MTases_sf"/>
</dbReference>
<dbReference type="NCBIfam" id="TIGR00406">
    <property type="entry name" value="prmA"/>
    <property type="match status" value="1"/>
</dbReference>
<dbReference type="PANTHER" id="PTHR43648">
    <property type="entry name" value="ELECTRON TRANSFER FLAVOPROTEIN BETA SUBUNIT LYSINE METHYLTRANSFERASE"/>
    <property type="match status" value="1"/>
</dbReference>
<dbReference type="PANTHER" id="PTHR43648:SF1">
    <property type="entry name" value="ELECTRON TRANSFER FLAVOPROTEIN BETA SUBUNIT LYSINE METHYLTRANSFERASE"/>
    <property type="match status" value="1"/>
</dbReference>
<dbReference type="Pfam" id="PF06325">
    <property type="entry name" value="PrmA"/>
    <property type="match status" value="1"/>
</dbReference>
<dbReference type="PIRSF" id="PIRSF000401">
    <property type="entry name" value="RPL11_MTase"/>
    <property type="match status" value="1"/>
</dbReference>
<dbReference type="SUPFAM" id="SSF53335">
    <property type="entry name" value="S-adenosyl-L-methionine-dependent methyltransferases"/>
    <property type="match status" value="1"/>
</dbReference>
<organism>
    <name type="scientific">Helicobacter pylori (strain HPAG1)</name>
    <dbReference type="NCBI Taxonomy" id="357544"/>
    <lineage>
        <taxon>Bacteria</taxon>
        <taxon>Pseudomonadati</taxon>
        <taxon>Campylobacterota</taxon>
        <taxon>Epsilonproteobacteria</taxon>
        <taxon>Campylobacterales</taxon>
        <taxon>Helicobacteraceae</taxon>
        <taxon>Helicobacter</taxon>
    </lineage>
</organism>
<gene>
    <name evidence="1" type="primary">prmA</name>
    <name type="ordered locus">HPAG1_0379</name>
</gene>
<name>PRMA_HELPH</name>
<feature type="chain" id="PRO_1000192635" description="Ribosomal protein L11 methyltransferase">
    <location>
        <begin position="1"/>
        <end position="329"/>
    </location>
</feature>
<feature type="binding site" evidence="1">
    <location>
        <position position="177"/>
    </location>
    <ligand>
        <name>S-adenosyl-L-methionine</name>
        <dbReference type="ChEBI" id="CHEBI:59789"/>
    </ligand>
</feature>
<feature type="binding site" evidence="1">
    <location>
        <position position="198"/>
    </location>
    <ligand>
        <name>S-adenosyl-L-methionine</name>
        <dbReference type="ChEBI" id="CHEBI:59789"/>
    </ligand>
</feature>
<feature type="binding site" evidence="1">
    <location>
        <position position="220"/>
    </location>
    <ligand>
        <name>S-adenosyl-L-methionine</name>
        <dbReference type="ChEBI" id="CHEBI:59789"/>
    </ligand>
</feature>
<feature type="binding site" evidence="1">
    <location>
        <position position="264"/>
    </location>
    <ligand>
        <name>S-adenosyl-L-methionine</name>
        <dbReference type="ChEBI" id="CHEBI:59789"/>
    </ligand>
</feature>
<comment type="function">
    <text evidence="1">Methylates ribosomal protein L11.</text>
</comment>
<comment type="catalytic activity">
    <reaction evidence="1">
        <text>L-lysyl-[protein] + 3 S-adenosyl-L-methionine = N(6),N(6),N(6)-trimethyl-L-lysyl-[protein] + 3 S-adenosyl-L-homocysteine + 3 H(+)</text>
        <dbReference type="Rhea" id="RHEA:54192"/>
        <dbReference type="Rhea" id="RHEA-COMP:9752"/>
        <dbReference type="Rhea" id="RHEA-COMP:13826"/>
        <dbReference type="ChEBI" id="CHEBI:15378"/>
        <dbReference type="ChEBI" id="CHEBI:29969"/>
        <dbReference type="ChEBI" id="CHEBI:57856"/>
        <dbReference type="ChEBI" id="CHEBI:59789"/>
        <dbReference type="ChEBI" id="CHEBI:61961"/>
    </reaction>
</comment>
<comment type="subcellular location">
    <subcellularLocation>
        <location evidence="1">Cytoplasm</location>
    </subcellularLocation>
</comment>
<comment type="similarity">
    <text evidence="1">Belongs to the methyltransferase superfamily. PrmA family.</text>
</comment>
<evidence type="ECO:0000255" key="1">
    <source>
        <dbReference type="HAMAP-Rule" id="MF_00735"/>
    </source>
</evidence>
<reference key="1">
    <citation type="journal article" date="2006" name="Proc. Natl. Acad. Sci. U.S.A.">
        <title>The complete genome sequence of a chronic atrophic gastritis Helicobacter pylori strain: evolution during disease progression.</title>
        <authorList>
            <person name="Oh J.D."/>
            <person name="Kling-Baeckhed H."/>
            <person name="Giannakis M."/>
            <person name="Xu J."/>
            <person name="Fulton R.S."/>
            <person name="Fulton L.A."/>
            <person name="Cordum H.S."/>
            <person name="Wang C."/>
            <person name="Elliott G."/>
            <person name="Edwards J."/>
            <person name="Mardis E.R."/>
            <person name="Engstrand L.G."/>
            <person name="Gordon J.I."/>
        </authorList>
    </citation>
    <scope>NUCLEOTIDE SEQUENCE [LARGE SCALE GENOMIC DNA]</scope>
    <source>
        <strain>HPAG1</strain>
    </source>
</reference>
<accession>Q1CUC6</accession>
<protein>
    <recommendedName>
        <fullName evidence="1">Ribosomal protein L11 methyltransferase</fullName>
        <shortName evidence="1">L11 Mtase</shortName>
        <ecNumber evidence="1">2.1.1.-</ecNumber>
    </recommendedName>
</protein>
<proteinExistence type="inferred from homology"/>